<proteinExistence type="inferred from homology"/>
<sequence>MEITEIKLKKRDKIGKQYAKKYRRSNLIPGVVYGAHLKENIHVLVEKKDLWNLIKKGHSKEQHILRLIIEDGENTITENAILQDIQIDPIKDDLLHVDFHAVSLEEVVDVYVPVVLVGESKGVKQGGILQHGVEEILIRALPLDVPPHIEVDITDLEIGDSITVGDLNLPENIKVLTPADEVIVNIIPPKGYTEEASTEESQTESQS</sequence>
<reference key="1">
    <citation type="journal article" date="2014" name="Genome Announc.">
        <title>Complete Genome Sequence of the Extreme Thermophile Dictyoglomus thermophilum H-6-12.</title>
        <authorList>
            <person name="Coil D.A."/>
            <person name="Badger J.H."/>
            <person name="Forberger H.C."/>
            <person name="Riggs F."/>
            <person name="Madupu R."/>
            <person name="Fedorova N."/>
            <person name="Ward N."/>
            <person name="Robb F.T."/>
            <person name="Eisen J.A."/>
        </authorList>
    </citation>
    <scope>NUCLEOTIDE SEQUENCE [LARGE SCALE GENOMIC DNA]</scope>
    <source>
        <strain>ATCC 35947 / DSM 3960 / H-6-12</strain>
    </source>
</reference>
<protein>
    <recommendedName>
        <fullName evidence="1">Large ribosomal subunit protein bL25</fullName>
    </recommendedName>
    <alternativeName>
        <fullName evidence="2">50S ribosomal protein L25</fullName>
    </alternativeName>
    <alternativeName>
        <fullName evidence="1">General stress protein CTC</fullName>
    </alternativeName>
</protein>
<dbReference type="EMBL" id="CP001146">
    <property type="protein sequence ID" value="ACI19320.1"/>
    <property type="molecule type" value="Genomic_DNA"/>
</dbReference>
<dbReference type="RefSeq" id="WP_012547952.1">
    <property type="nucleotide sequence ID" value="NC_011297.1"/>
</dbReference>
<dbReference type="SMR" id="B5YD92"/>
<dbReference type="STRING" id="309799.DICTH_0627"/>
<dbReference type="PaxDb" id="309799-DICTH_0627"/>
<dbReference type="KEGG" id="dth:DICTH_0627"/>
<dbReference type="eggNOG" id="COG1825">
    <property type="taxonomic scope" value="Bacteria"/>
</dbReference>
<dbReference type="HOGENOM" id="CLU_075939_2_0_0"/>
<dbReference type="OrthoDB" id="9806411at2"/>
<dbReference type="Proteomes" id="UP000001733">
    <property type="component" value="Chromosome"/>
</dbReference>
<dbReference type="GO" id="GO:0022625">
    <property type="term" value="C:cytosolic large ribosomal subunit"/>
    <property type="evidence" value="ECO:0007669"/>
    <property type="project" value="TreeGrafter"/>
</dbReference>
<dbReference type="GO" id="GO:0008097">
    <property type="term" value="F:5S rRNA binding"/>
    <property type="evidence" value="ECO:0007669"/>
    <property type="project" value="InterPro"/>
</dbReference>
<dbReference type="GO" id="GO:0003735">
    <property type="term" value="F:structural constituent of ribosome"/>
    <property type="evidence" value="ECO:0007669"/>
    <property type="project" value="InterPro"/>
</dbReference>
<dbReference type="GO" id="GO:0006412">
    <property type="term" value="P:translation"/>
    <property type="evidence" value="ECO:0007669"/>
    <property type="project" value="UniProtKB-UniRule"/>
</dbReference>
<dbReference type="CDD" id="cd00495">
    <property type="entry name" value="Ribosomal_L25_TL5_CTC"/>
    <property type="match status" value="1"/>
</dbReference>
<dbReference type="FunFam" id="2.40.240.10:FF:000043">
    <property type="entry name" value="50S ribosomal protein L25"/>
    <property type="match status" value="1"/>
</dbReference>
<dbReference type="Gene3D" id="2.170.120.20">
    <property type="entry name" value="Ribosomal protein L25, beta domain"/>
    <property type="match status" value="1"/>
</dbReference>
<dbReference type="Gene3D" id="2.40.240.10">
    <property type="entry name" value="Ribosomal Protein L25, Chain P"/>
    <property type="match status" value="1"/>
</dbReference>
<dbReference type="HAMAP" id="MF_01334">
    <property type="entry name" value="Ribosomal_bL25_CTC"/>
    <property type="match status" value="1"/>
</dbReference>
<dbReference type="InterPro" id="IPR020056">
    <property type="entry name" value="Rbsml_bL25/Gln-tRNA_synth_N"/>
</dbReference>
<dbReference type="InterPro" id="IPR011035">
    <property type="entry name" value="Ribosomal_bL25/Gln-tRNA_synth"/>
</dbReference>
<dbReference type="InterPro" id="IPR020057">
    <property type="entry name" value="Ribosomal_bL25_b-dom"/>
</dbReference>
<dbReference type="InterPro" id="IPR037121">
    <property type="entry name" value="Ribosomal_bL25_C"/>
</dbReference>
<dbReference type="InterPro" id="IPR001021">
    <property type="entry name" value="Ribosomal_bL25_long"/>
</dbReference>
<dbReference type="InterPro" id="IPR029751">
    <property type="entry name" value="Ribosomal_L25_dom"/>
</dbReference>
<dbReference type="InterPro" id="IPR020930">
    <property type="entry name" value="Ribosomal_uL5_bac-type"/>
</dbReference>
<dbReference type="NCBIfam" id="TIGR00731">
    <property type="entry name" value="bL25_bact_ctc"/>
    <property type="match status" value="1"/>
</dbReference>
<dbReference type="NCBIfam" id="NF004139">
    <property type="entry name" value="PRK05618.4-2"/>
    <property type="match status" value="1"/>
</dbReference>
<dbReference type="PANTHER" id="PTHR33284">
    <property type="entry name" value="RIBOSOMAL PROTEIN L25/GLN-TRNA SYNTHETASE, ANTI-CODON-BINDING DOMAIN-CONTAINING PROTEIN"/>
    <property type="match status" value="1"/>
</dbReference>
<dbReference type="PANTHER" id="PTHR33284:SF1">
    <property type="entry name" value="RIBOSOMAL PROTEIN L25_GLN-TRNA SYNTHETASE, ANTI-CODON-BINDING DOMAIN-CONTAINING PROTEIN"/>
    <property type="match status" value="1"/>
</dbReference>
<dbReference type="Pfam" id="PF01386">
    <property type="entry name" value="Ribosomal_L25p"/>
    <property type="match status" value="1"/>
</dbReference>
<dbReference type="Pfam" id="PF14693">
    <property type="entry name" value="Ribosomal_TL5_C"/>
    <property type="match status" value="1"/>
</dbReference>
<dbReference type="SUPFAM" id="SSF50715">
    <property type="entry name" value="Ribosomal protein L25-like"/>
    <property type="match status" value="1"/>
</dbReference>
<feature type="chain" id="PRO_1000142518" description="Large ribosomal subunit protein bL25">
    <location>
        <begin position="1"/>
        <end position="207"/>
    </location>
</feature>
<keyword id="KW-0687">Ribonucleoprotein</keyword>
<keyword id="KW-0689">Ribosomal protein</keyword>
<keyword id="KW-0694">RNA-binding</keyword>
<keyword id="KW-0699">rRNA-binding</keyword>
<organism>
    <name type="scientific">Dictyoglomus thermophilum (strain ATCC 35947 / DSM 3960 / H-6-12)</name>
    <dbReference type="NCBI Taxonomy" id="309799"/>
    <lineage>
        <taxon>Bacteria</taxon>
        <taxon>Pseudomonadati</taxon>
        <taxon>Dictyoglomota</taxon>
        <taxon>Dictyoglomia</taxon>
        <taxon>Dictyoglomales</taxon>
        <taxon>Dictyoglomaceae</taxon>
        <taxon>Dictyoglomus</taxon>
    </lineage>
</organism>
<name>RL25_DICT6</name>
<comment type="function">
    <text evidence="1">This is one of the proteins that binds to the 5S RNA in the ribosome where it forms part of the central protuberance.</text>
</comment>
<comment type="subunit">
    <text evidence="1">Part of the 50S ribosomal subunit; part of the 5S rRNA/L5/L18/L25 subcomplex. Contacts the 5S rRNA. Binds to the 5S rRNA independently of L5 and L18.</text>
</comment>
<comment type="similarity">
    <text evidence="1">Belongs to the bacterial ribosomal protein bL25 family. CTC subfamily.</text>
</comment>
<gene>
    <name evidence="1" type="primary">rplY</name>
    <name evidence="1" type="synonym">ctc</name>
    <name type="ordered locus">DICTH_0627</name>
</gene>
<evidence type="ECO:0000255" key="1">
    <source>
        <dbReference type="HAMAP-Rule" id="MF_01334"/>
    </source>
</evidence>
<evidence type="ECO:0000305" key="2"/>
<accession>B5YD92</accession>